<gene>
    <name type="ordered locus">At3g15360</name>
    <name type="ORF">MJK13.2</name>
</gene>
<keyword id="KW-0150">Chloroplast</keyword>
<keyword id="KW-1015">Disulfide bond</keyword>
<keyword id="KW-0249">Electron transport</keyword>
<keyword id="KW-0934">Plastid</keyword>
<keyword id="KW-0676">Redox-active center</keyword>
<keyword id="KW-1185">Reference proteome</keyword>
<keyword id="KW-0809">Transit peptide</keyword>
<keyword id="KW-0813">Transport</keyword>
<protein>
    <recommendedName>
        <fullName>Thioredoxin M4, chloroplastic</fullName>
        <shortName>AtTrxm4</shortName>
    </recommendedName>
</protein>
<organism>
    <name type="scientific">Arabidopsis thaliana</name>
    <name type="common">Mouse-ear cress</name>
    <dbReference type="NCBI Taxonomy" id="3702"/>
    <lineage>
        <taxon>Eukaryota</taxon>
        <taxon>Viridiplantae</taxon>
        <taxon>Streptophyta</taxon>
        <taxon>Embryophyta</taxon>
        <taxon>Tracheophyta</taxon>
        <taxon>Spermatophyta</taxon>
        <taxon>Magnoliopsida</taxon>
        <taxon>eudicotyledons</taxon>
        <taxon>Gunneridae</taxon>
        <taxon>Pentapetalae</taxon>
        <taxon>rosids</taxon>
        <taxon>malvids</taxon>
        <taxon>Brassicales</taxon>
        <taxon>Brassicaceae</taxon>
        <taxon>Camelineae</taxon>
        <taxon>Arabidopsis</taxon>
    </lineage>
</organism>
<accession>Q9SEU6</accession>
<accession>Q0WUS9</accession>
<accession>Q9LDP6</accession>
<sequence length="193" mass="21172">MASLLDSVTVTRVFSLPIAASVSSSSAAPSVSRRRISPARFLEFRGLKSSRSLVTQSASLGANRRTRIARGGRIACEAQDTTAAAVEVPNLSDSEWQTKVLESDVPVLVEFWAPWCGPCRMIHPIVDQLAKDFAGKFKFYKINTDESPNTANRYGIRSVPTVIIFKGGEKKDSIIGAVPRETLEKTIERFLVE</sequence>
<reference key="1">
    <citation type="journal article" date="1999" name="Gene">
        <title>The Arabidopsis thaliana genome encodes at least four thioredoxins m and a new prokaryotic-like thioredoxin.</title>
        <authorList>
            <person name="Mestres-Ortega D."/>
            <person name="Meyer Y."/>
        </authorList>
    </citation>
    <scope>NUCLEOTIDE SEQUENCE [MRNA]</scope>
</reference>
<reference key="2">
    <citation type="journal article" date="2000" name="DNA Res.">
        <title>Structural analysis of Arabidopsis thaliana chromosome 3. I. Sequence features of the regions of 4,504,864 bp covered by sixty P1 and TAC clones.</title>
        <authorList>
            <person name="Sato S."/>
            <person name="Nakamura Y."/>
            <person name="Kaneko T."/>
            <person name="Katoh T."/>
            <person name="Asamizu E."/>
            <person name="Tabata S."/>
        </authorList>
    </citation>
    <scope>NUCLEOTIDE SEQUENCE [LARGE SCALE GENOMIC DNA]</scope>
    <source>
        <strain>cv. Columbia</strain>
    </source>
</reference>
<reference key="3">
    <citation type="journal article" date="2000" name="Nature">
        <title>Sequence and analysis of chromosome 3 of the plant Arabidopsis thaliana.</title>
        <authorList>
            <person name="Salanoubat M."/>
            <person name="Lemcke K."/>
            <person name="Rieger M."/>
            <person name="Ansorge W."/>
            <person name="Unseld M."/>
            <person name="Fartmann B."/>
            <person name="Valle G."/>
            <person name="Bloecker H."/>
            <person name="Perez-Alonso M."/>
            <person name="Obermaier B."/>
            <person name="Delseny M."/>
            <person name="Boutry M."/>
            <person name="Grivell L.A."/>
            <person name="Mache R."/>
            <person name="Puigdomenech P."/>
            <person name="De Simone V."/>
            <person name="Choisne N."/>
            <person name="Artiguenave F."/>
            <person name="Robert C."/>
            <person name="Brottier P."/>
            <person name="Wincker P."/>
            <person name="Cattolico L."/>
            <person name="Weissenbach J."/>
            <person name="Saurin W."/>
            <person name="Quetier F."/>
            <person name="Schaefer M."/>
            <person name="Mueller-Auer S."/>
            <person name="Gabel C."/>
            <person name="Fuchs M."/>
            <person name="Benes V."/>
            <person name="Wurmbach E."/>
            <person name="Drzonek H."/>
            <person name="Erfle H."/>
            <person name="Jordan N."/>
            <person name="Bangert S."/>
            <person name="Wiedelmann R."/>
            <person name="Kranz H."/>
            <person name="Voss H."/>
            <person name="Holland R."/>
            <person name="Brandt P."/>
            <person name="Nyakatura G."/>
            <person name="Vezzi A."/>
            <person name="D'Angelo M."/>
            <person name="Pallavicini A."/>
            <person name="Toppo S."/>
            <person name="Simionati B."/>
            <person name="Conrad A."/>
            <person name="Hornischer K."/>
            <person name="Kauer G."/>
            <person name="Loehnert T.-H."/>
            <person name="Nordsiek G."/>
            <person name="Reichelt J."/>
            <person name="Scharfe M."/>
            <person name="Schoen O."/>
            <person name="Bargues M."/>
            <person name="Terol J."/>
            <person name="Climent J."/>
            <person name="Navarro P."/>
            <person name="Collado C."/>
            <person name="Perez-Perez A."/>
            <person name="Ottenwaelder B."/>
            <person name="Duchemin D."/>
            <person name="Cooke R."/>
            <person name="Laudie M."/>
            <person name="Berger-Llauro C."/>
            <person name="Purnelle B."/>
            <person name="Masuy D."/>
            <person name="de Haan M."/>
            <person name="Maarse A.C."/>
            <person name="Alcaraz J.-P."/>
            <person name="Cottet A."/>
            <person name="Casacuberta E."/>
            <person name="Monfort A."/>
            <person name="Argiriou A."/>
            <person name="Flores M."/>
            <person name="Liguori R."/>
            <person name="Vitale D."/>
            <person name="Mannhaupt G."/>
            <person name="Haase D."/>
            <person name="Schoof H."/>
            <person name="Rudd S."/>
            <person name="Zaccaria P."/>
            <person name="Mewes H.-W."/>
            <person name="Mayer K.F.X."/>
            <person name="Kaul S."/>
            <person name="Town C.D."/>
            <person name="Koo H.L."/>
            <person name="Tallon L.J."/>
            <person name="Jenkins J."/>
            <person name="Rooney T."/>
            <person name="Rizzo M."/>
            <person name="Walts A."/>
            <person name="Utterback T."/>
            <person name="Fujii C.Y."/>
            <person name="Shea T.P."/>
            <person name="Creasy T.H."/>
            <person name="Haas B."/>
            <person name="Maiti R."/>
            <person name="Wu D."/>
            <person name="Peterson J."/>
            <person name="Van Aken S."/>
            <person name="Pai G."/>
            <person name="Militscher J."/>
            <person name="Sellers P."/>
            <person name="Gill J.E."/>
            <person name="Feldblyum T.V."/>
            <person name="Preuss D."/>
            <person name="Lin X."/>
            <person name="Nierman W.C."/>
            <person name="Salzberg S.L."/>
            <person name="White O."/>
            <person name="Venter J.C."/>
            <person name="Fraser C.M."/>
            <person name="Kaneko T."/>
            <person name="Nakamura Y."/>
            <person name="Sato S."/>
            <person name="Kato T."/>
            <person name="Asamizu E."/>
            <person name="Sasamoto S."/>
            <person name="Kimura T."/>
            <person name="Idesawa K."/>
            <person name="Kawashima K."/>
            <person name="Kishida Y."/>
            <person name="Kiyokawa C."/>
            <person name="Kohara M."/>
            <person name="Matsumoto M."/>
            <person name="Matsuno A."/>
            <person name="Muraki A."/>
            <person name="Nakayama S."/>
            <person name="Nakazaki N."/>
            <person name="Shinpo S."/>
            <person name="Takeuchi C."/>
            <person name="Wada T."/>
            <person name="Watanabe A."/>
            <person name="Yamada M."/>
            <person name="Yasuda M."/>
            <person name="Tabata S."/>
        </authorList>
    </citation>
    <scope>NUCLEOTIDE SEQUENCE [LARGE SCALE GENOMIC DNA]</scope>
    <source>
        <strain>cv. Columbia</strain>
    </source>
</reference>
<reference key="4">
    <citation type="journal article" date="2017" name="Plant J.">
        <title>Araport11: a complete reannotation of the Arabidopsis thaliana reference genome.</title>
        <authorList>
            <person name="Cheng C.Y."/>
            <person name="Krishnakumar V."/>
            <person name="Chan A.P."/>
            <person name="Thibaud-Nissen F."/>
            <person name="Schobel S."/>
            <person name="Town C.D."/>
        </authorList>
    </citation>
    <scope>GENOME REANNOTATION</scope>
    <source>
        <strain>cv. Columbia</strain>
    </source>
</reference>
<reference key="5">
    <citation type="journal article" date="2003" name="Science">
        <title>Empirical analysis of transcriptional activity in the Arabidopsis genome.</title>
        <authorList>
            <person name="Yamada K."/>
            <person name="Lim J."/>
            <person name="Dale J.M."/>
            <person name="Chen H."/>
            <person name="Shinn P."/>
            <person name="Palm C.J."/>
            <person name="Southwick A.M."/>
            <person name="Wu H.C."/>
            <person name="Kim C.J."/>
            <person name="Nguyen M."/>
            <person name="Pham P.K."/>
            <person name="Cheuk R.F."/>
            <person name="Karlin-Newmann G."/>
            <person name="Liu S.X."/>
            <person name="Lam B."/>
            <person name="Sakano H."/>
            <person name="Wu T."/>
            <person name="Yu G."/>
            <person name="Miranda M."/>
            <person name="Quach H.L."/>
            <person name="Tripp M."/>
            <person name="Chang C.H."/>
            <person name="Lee J.M."/>
            <person name="Toriumi M.J."/>
            <person name="Chan M.M."/>
            <person name="Tang C.C."/>
            <person name="Onodera C.S."/>
            <person name="Deng J.M."/>
            <person name="Akiyama K."/>
            <person name="Ansari Y."/>
            <person name="Arakawa T."/>
            <person name="Banh J."/>
            <person name="Banno F."/>
            <person name="Bowser L."/>
            <person name="Brooks S.Y."/>
            <person name="Carninci P."/>
            <person name="Chao Q."/>
            <person name="Choy N."/>
            <person name="Enju A."/>
            <person name="Goldsmith A.D."/>
            <person name="Gurjal M."/>
            <person name="Hansen N.F."/>
            <person name="Hayashizaki Y."/>
            <person name="Johnson-Hopson C."/>
            <person name="Hsuan V.W."/>
            <person name="Iida K."/>
            <person name="Karnes M."/>
            <person name="Khan S."/>
            <person name="Koesema E."/>
            <person name="Ishida J."/>
            <person name="Jiang P.X."/>
            <person name="Jones T."/>
            <person name="Kawai J."/>
            <person name="Kamiya A."/>
            <person name="Meyers C."/>
            <person name="Nakajima M."/>
            <person name="Narusaka M."/>
            <person name="Seki M."/>
            <person name="Sakurai T."/>
            <person name="Satou M."/>
            <person name="Tamse R."/>
            <person name="Vaysberg M."/>
            <person name="Wallender E.K."/>
            <person name="Wong C."/>
            <person name="Yamamura Y."/>
            <person name="Yuan S."/>
            <person name="Shinozaki K."/>
            <person name="Davis R.W."/>
            <person name="Theologis A."/>
            <person name="Ecker J.R."/>
        </authorList>
    </citation>
    <scope>NUCLEOTIDE SEQUENCE [LARGE SCALE MRNA]</scope>
    <source>
        <strain>cv. Columbia</strain>
    </source>
</reference>
<reference key="6">
    <citation type="submission" date="2002-03" db="EMBL/GenBank/DDBJ databases">
        <title>Full-length cDNA from Arabidopsis thaliana.</title>
        <authorList>
            <person name="Brover V.V."/>
            <person name="Troukhan M.E."/>
            <person name="Alexandrov N.A."/>
            <person name="Lu Y.-P."/>
            <person name="Flavell R.B."/>
            <person name="Feldmann K.A."/>
        </authorList>
    </citation>
    <scope>NUCLEOTIDE SEQUENCE [LARGE SCALE MRNA]</scope>
</reference>
<reference key="7">
    <citation type="submission" date="2006-07" db="EMBL/GenBank/DDBJ databases">
        <title>Large-scale analysis of RIKEN Arabidopsis full-length (RAFL) cDNAs.</title>
        <authorList>
            <person name="Totoki Y."/>
            <person name="Seki M."/>
            <person name="Ishida J."/>
            <person name="Nakajima M."/>
            <person name="Enju A."/>
            <person name="Kamiya A."/>
            <person name="Narusaka M."/>
            <person name="Shin-i T."/>
            <person name="Nakagawa M."/>
            <person name="Sakamoto N."/>
            <person name="Oishi K."/>
            <person name="Kohara Y."/>
            <person name="Kobayashi M."/>
            <person name="Toyoda A."/>
            <person name="Sakaki Y."/>
            <person name="Sakurai T."/>
            <person name="Iida K."/>
            <person name="Akiyama K."/>
            <person name="Satou M."/>
            <person name="Toyoda T."/>
            <person name="Konagaya A."/>
            <person name="Carninci P."/>
            <person name="Kawai J."/>
            <person name="Hayashizaki Y."/>
            <person name="Shinozaki K."/>
        </authorList>
    </citation>
    <scope>NUCLEOTIDE SEQUENCE [LARGE SCALE MRNA] OF 14-193</scope>
    <source>
        <strain>cv. Columbia</strain>
    </source>
</reference>
<reference key="8">
    <citation type="journal article" date="2009" name="FEBS Lett.">
        <title>Redox regulation of chloroplastic glucose-6-phosphate dehydrogenase: a new role for f-type thioredoxin.</title>
        <authorList>
            <person name="Nee G."/>
            <person name="Zaffagnini M."/>
            <person name="Trost P."/>
            <person name="Issakidis-Bourguet E."/>
        </authorList>
    </citation>
    <scope>FUNCTION</scope>
</reference>
<reference key="9">
    <citation type="journal article" date="2009" name="Mol. Plant">
        <title>Comparative genomic study of the thioredoxin family in photosynthetic organisms with emphasis on Populus trichocarpa.</title>
        <authorList>
            <person name="Chibani K."/>
            <person name="Wingsle G."/>
            <person name="Jacquot J.P."/>
            <person name="Gelhaye E."/>
            <person name="Rouhier N."/>
        </authorList>
    </citation>
    <scope>GENE FAMILY</scope>
    <scope>NOMENCLATURE</scope>
</reference>
<reference key="10">
    <citation type="journal article" date="2009" name="Plant Mol. Biol.">
        <title>A novel extended family of stromal thioredoxins.</title>
        <authorList>
            <person name="Cain P."/>
            <person name="Hall M."/>
            <person name="Schroder W.P."/>
            <person name="Kieselbach T."/>
            <person name="Robinson C."/>
        </authorList>
    </citation>
    <scope>SUBCELLULAR LOCATION</scope>
</reference>
<proteinExistence type="evidence at transcript level"/>
<dbReference type="EMBL" id="AF095752">
    <property type="protein sequence ID" value="AAF15951.1"/>
    <property type="molecule type" value="mRNA"/>
</dbReference>
<dbReference type="EMBL" id="AB022218">
    <property type="protein sequence ID" value="BAB02365.1"/>
    <property type="molecule type" value="Genomic_DNA"/>
</dbReference>
<dbReference type="EMBL" id="AC024081">
    <property type="protein sequence ID" value="AAF35402.1"/>
    <property type="molecule type" value="Genomic_DNA"/>
</dbReference>
<dbReference type="EMBL" id="CP002686">
    <property type="protein sequence ID" value="AEE75659.1"/>
    <property type="molecule type" value="Genomic_DNA"/>
</dbReference>
<dbReference type="EMBL" id="AF375443">
    <property type="protein sequence ID" value="AAK53027.1"/>
    <property type="molecule type" value="mRNA"/>
</dbReference>
<dbReference type="EMBL" id="AY060538">
    <property type="protein sequence ID" value="AAL31169.1"/>
    <property type="molecule type" value="mRNA"/>
</dbReference>
<dbReference type="EMBL" id="AY088157">
    <property type="protein sequence ID" value="AAM65701.1"/>
    <property type="molecule type" value="mRNA"/>
</dbReference>
<dbReference type="EMBL" id="AK227059">
    <property type="protein sequence ID" value="BAE99119.1"/>
    <property type="molecule type" value="mRNA"/>
</dbReference>
<dbReference type="SMR" id="Q9SEU6"/>
<dbReference type="BioGRID" id="6109">
    <property type="interactions" value="7"/>
</dbReference>
<dbReference type="FunCoup" id="Q9SEU6">
    <property type="interactions" value="919"/>
</dbReference>
<dbReference type="IntAct" id="Q9SEU6">
    <property type="interactions" value="6"/>
</dbReference>
<dbReference type="STRING" id="3702.Q9SEU6"/>
<dbReference type="iPTMnet" id="Q9SEU6"/>
<dbReference type="PaxDb" id="3702-AT3G15360.1"/>
<dbReference type="ProteomicsDB" id="234648"/>
<dbReference type="EnsemblPlants" id="AT3G15360.1">
    <property type="protein sequence ID" value="AT3G15360.1"/>
    <property type="gene ID" value="AT3G15360"/>
</dbReference>
<dbReference type="Gramene" id="AT3G15360.1">
    <property type="protein sequence ID" value="AT3G15360.1"/>
    <property type="gene ID" value="AT3G15360"/>
</dbReference>
<dbReference type="KEGG" id="ath:AT3G15360"/>
<dbReference type="Araport" id="AT3G15360"/>
<dbReference type="TAIR" id="AT3G15360">
    <property type="gene designation" value="TRX-M4"/>
</dbReference>
<dbReference type="eggNOG" id="KOG0910">
    <property type="taxonomic scope" value="Eukaryota"/>
</dbReference>
<dbReference type="HOGENOM" id="CLU_090389_0_0_1"/>
<dbReference type="InParanoid" id="Q9SEU6"/>
<dbReference type="OMA" id="VGRIFCE"/>
<dbReference type="OrthoDB" id="2121326at2759"/>
<dbReference type="PhylomeDB" id="Q9SEU6"/>
<dbReference type="PRO" id="PR:Q9SEU6"/>
<dbReference type="Proteomes" id="UP000006548">
    <property type="component" value="Chromosome 3"/>
</dbReference>
<dbReference type="ExpressionAtlas" id="Q9SEU6">
    <property type="expression patterns" value="baseline and differential"/>
</dbReference>
<dbReference type="GO" id="GO:0009507">
    <property type="term" value="C:chloroplast"/>
    <property type="evidence" value="ECO:0007005"/>
    <property type="project" value="TAIR"/>
</dbReference>
<dbReference type="GO" id="GO:0009941">
    <property type="term" value="C:chloroplast envelope"/>
    <property type="evidence" value="ECO:0007005"/>
    <property type="project" value="TAIR"/>
</dbReference>
<dbReference type="GO" id="GO:0009570">
    <property type="term" value="C:chloroplast stroma"/>
    <property type="evidence" value="ECO:0007005"/>
    <property type="project" value="TAIR"/>
</dbReference>
<dbReference type="GO" id="GO:0009535">
    <property type="term" value="C:chloroplast thylakoid membrane"/>
    <property type="evidence" value="ECO:0007005"/>
    <property type="project" value="TAIR"/>
</dbReference>
<dbReference type="GO" id="GO:0005829">
    <property type="term" value="C:cytosol"/>
    <property type="evidence" value="ECO:0007005"/>
    <property type="project" value="TAIR"/>
</dbReference>
<dbReference type="GO" id="GO:0009579">
    <property type="term" value="C:thylakoid"/>
    <property type="evidence" value="ECO:0007005"/>
    <property type="project" value="TAIR"/>
</dbReference>
<dbReference type="GO" id="GO:0008047">
    <property type="term" value="F:enzyme activator activity"/>
    <property type="evidence" value="ECO:0000314"/>
    <property type="project" value="TAIR"/>
</dbReference>
<dbReference type="GO" id="GO:0004857">
    <property type="term" value="F:enzyme inhibitor activity"/>
    <property type="evidence" value="ECO:0000314"/>
    <property type="project" value="UniProtKB"/>
</dbReference>
<dbReference type="GO" id="GO:0019904">
    <property type="term" value="F:protein domain specific binding"/>
    <property type="evidence" value="ECO:0000353"/>
    <property type="project" value="CAFA"/>
</dbReference>
<dbReference type="GO" id="GO:0015035">
    <property type="term" value="F:protein-disulfide reductase activity"/>
    <property type="evidence" value="ECO:0007669"/>
    <property type="project" value="InterPro"/>
</dbReference>
<dbReference type="GO" id="GO:0043086">
    <property type="term" value="P:negative regulation of catalytic activity"/>
    <property type="evidence" value="ECO:0000314"/>
    <property type="project" value="UniProtKB"/>
</dbReference>
<dbReference type="GO" id="GO:0043085">
    <property type="term" value="P:positive regulation of catalytic activity"/>
    <property type="evidence" value="ECO:0000314"/>
    <property type="project" value="TAIR"/>
</dbReference>
<dbReference type="GO" id="GO:0006109">
    <property type="term" value="P:regulation of carbohydrate metabolic process"/>
    <property type="evidence" value="ECO:0000314"/>
    <property type="project" value="UniProtKB"/>
</dbReference>
<dbReference type="CDD" id="cd02947">
    <property type="entry name" value="TRX_family"/>
    <property type="match status" value="1"/>
</dbReference>
<dbReference type="FunFam" id="3.40.30.10:FF:000001">
    <property type="entry name" value="Thioredoxin"/>
    <property type="match status" value="1"/>
</dbReference>
<dbReference type="Gene3D" id="3.40.30.10">
    <property type="entry name" value="Glutaredoxin"/>
    <property type="match status" value="1"/>
</dbReference>
<dbReference type="InterPro" id="IPR005746">
    <property type="entry name" value="Thioredoxin"/>
</dbReference>
<dbReference type="InterPro" id="IPR036249">
    <property type="entry name" value="Thioredoxin-like_sf"/>
</dbReference>
<dbReference type="InterPro" id="IPR017937">
    <property type="entry name" value="Thioredoxin_CS"/>
</dbReference>
<dbReference type="InterPro" id="IPR013766">
    <property type="entry name" value="Thioredoxin_domain"/>
</dbReference>
<dbReference type="NCBIfam" id="TIGR01068">
    <property type="entry name" value="thioredoxin"/>
    <property type="match status" value="1"/>
</dbReference>
<dbReference type="PANTHER" id="PTHR45663">
    <property type="entry name" value="GEO12009P1"/>
    <property type="match status" value="1"/>
</dbReference>
<dbReference type="PANTHER" id="PTHR45663:SF16">
    <property type="entry name" value="THIOREDOXIN M4, CHLOROPLASTIC"/>
    <property type="match status" value="1"/>
</dbReference>
<dbReference type="Pfam" id="PF00085">
    <property type="entry name" value="Thioredoxin"/>
    <property type="match status" value="1"/>
</dbReference>
<dbReference type="PRINTS" id="PR00421">
    <property type="entry name" value="THIOREDOXIN"/>
</dbReference>
<dbReference type="SUPFAM" id="SSF52833">
    <property type="entry name" value="Thioredoxin-like"/>
    <property type="match status" value="1"/>
</dbReference>
<dbReference type="PROSITE" id="PS00194">
    <property type="entry name" value="THIOREDOXIN_1"/>
    <property type="match status" value="1"/>
</dbReference>
<dbReference type="PROSITE" id="PS51352">
    <property type="entry name" value="THIOREDOXIN_2"/>
    <property type="match status" value="1"/>
</dbReference>
<name>TRXM4_ARATH</name>
<feature type="transit peptide" description="Chloroplast" evidence="2">
    <location>
        <begin position="1"/>
        <end position="82"/>
    </location>
</feature>
<feature type="chain" id="PRO_0000034165" description="Thioredoxin M4, chloroplastic">
    <location>
        <begin position="83"/>
        <end position="193"/>
    </location>
</feature>
<feature type="domain" description="Thioredoxin" evidence="3">
    <location>
        <begin position="83"/>
        <end position="192"/>
    </location>
</feature>
<feature type="active site" description="Nucleophile" evidence="1">
    <location>
        <position position="116"/>
    </location>
</feature>
<feature type="active site" description="Nucleophile" evidence="1">
    <location>
        <position position="119"/>
    </location>
</feature>
<feature type="site" description="Contributes to redox potential value" evidence="1">
    <location>
        <position position="117"/>
    </location>
</feature>
<feature type="site" description="Contributes to redox potential value" evidence="1">
    <location>
        <position position="118"/>
    </location>
</feature>
<feature type="disulfide bond" description="Redox-active" evidence="3">
    <location>
        <begin position="116"/>
        <end position="119"/>
    </location>
</feature>
<feature type="sequence conflict" description="In Ref. 1; AAF15951." evidence="6" ref="1">
    <original>A</original>
    <variation>P</variation>
    <location>
        <position position="151"/>
    </location>
</feature>
<evidence type="ECO:0000250" key="1"/>
<evidence type="ECO:0000255" key="2"/>
<evidence type="ECO:0000255" key="3">
    <source>
        <dbReference type="PROSITE-ProRule" id="PRU00691"/>
    </source>
</evidence>
<evidence type="ECO:0000269" key="4">
    <source>
    </source>
</evidence>
<evidence type="ECO:0000269" key="5">
    <source>
    </source>
</evidence>
<evidence type="ECO:0000305" key="6"/>
<comment type="function">
    <text evidence="5">Thiol-disulfide oxidoreductase involved in the redox regulation of enzyme of the oxidative pentose phosphate pathway. Under reducing conditions, inhibits the glucose-6-phosphate dehydrogenase.</text>
</comment>
<comment type="subcellular location">
    <subcellularLocation>
        <location evidence="4">Plastid</location>
        <location evidence="4">Chloroplast stroma</location>
    </subcellularLocation>
</comment>
<comment type="similarity">
    <text evidence="6">Belongs to the thioredoxin family. Plant M-type subfamily.</text>
</comment>